<reference key="1">
    <citation type="journal article" date="2003" name="J. Biol. Chem.">
        <title>IRBIT, a novel inositol 1,4,5-trisphosphate (IP3) receptor-binding protein, is released from the IP3 receptor upon IP3 binding to the receptor.</title>
        <authorList>
            <person name="Ando H."/>
            <person name="Mizutani A."/>
            <person name="Matsu-ura T."/>
            <person name="Mikoshiba K."/>
        </authorList>
    </citation>
    <scope>NUCLEOTIDE SEQUENCE [MRNA]</scope>
    <scope>INTERACTION WITH ITPR1</scope>
    <scope>FUNCTION</scope>
    <scope>TISSUE SPECIFICITY</scope>
    <scope>LACK OF S-ADENOSYLHOMOCYSTEINE HYDROLASE ACTIVITY</scope>
    <source>
        <tissue>Cerebellum</tissue>
    </source>
</reference>
<reference key="2">
    <citation type="journal article" date="2004" name="Genome Res.">
        <title>The status, quality, and expansion of the NIH full-length cDNA project: the Mammalian Gene Collection (MGC).</title>
        <authorList>
            <consortium name="The MGC Project Team"/>
        </authorList>
    </citation>
    <scope>NUCLEOTIDE SEQUENCE [LARGE SCALE MRNA]</scope>
    <source>
        <strain>Czech II</strain>
        <tissue>Mammary tumor</tissue>
    </source>
</reference>
<reference key="3">
    <citation type="journal article" date="2006" name="Biochem. Biophys. Res. Commun.">
        <title>Binding of IRBIT to the IP3 receptor: determinants and functional effects.</title>
        <authorList>
            <person name="Devogelaere B."/>
            <person name="Nadif Kasri N."/>
            <person name="Derua R."/>
            <person name="Waelkens E."/>
            <person name="Callewaert G."/>
            <person name="Missiaen L."/>
            <person name="Parys J.B."/>
            <person name="De Smedt H."/>
        </authorList>
    </citation>
    <scope>PROTEIN SEQUENCE OF 74-80</scope>
    <scope>INTERACTION WITH ITPR1</scope>
    <scope>MUTAGENESIS OF 70-SER--ASP-73; ASP-73; 82-THR--ASP-88 AND 86-ASP--GLU-88</scope>
    <scope>SUBCELLULAR LOCATION</scope>
</reference>
<reference key="4">
    <citation type="submission" date="2009-01" db="UniProtKB">
        <authorList>
            <person name="Lubec G."/>
            <person name="Sunyer B."/>
            <person name="Chen W.-Q."/>
        </authorList>
    </citation>
    <scope>PROTEIN SEQUENCE OF 479-486</scope>
    <scope>IDENTIFICATION BY MASS SPECTROMETRY</scope>
    <source>
        <strain>OF1</strain>
        <tissue>Hippocampus</tissue>
    </source>
</reference>
<reference key="5">
    <citation type="journal article" date="2002" name="Immunogenetics">
        <title>Identification of an S-adenosylhomocysteine hydrolase-like transcript induced during dendritic cell differentiation.</title>
        <authorList>
            <person name="Dekker J.W."/>
            <person name="Budhia S."/>
            <person name="Angel N.Z."/>
            <person name="Cooper B.J."/>
            <person name="Clark G.J."/>
            <person name="Hart D.N."/>
            <person name="Kato M."/>
        </authorList>
    </citation>
    <scope>IDENTIFICATION</scope>
</reference>
<reference key="6">
    <citation type="journal article" date="2006" name="Proc. Natl. Acad. Sci. U.S.A.">
        <title>IRBIT, an inositol 1,4,5-trisphosphate receptor-binding protein, specifically binds to and activates pancreas-type Na+/HCO3-cotransporter 1 (pNBC1).</title>
        <authorList>
            <person name="Shirakabe K."/>
            <person name="Priori G."/>
            <person name="Yamada H."/>
            <person name="Ando H."/>
            <person name="Horita S."/>
            <person name="Fujita T."/>
            <person name="Fujimoto I."/>
            <person name="Mizutani A."/>
            <person name="Seki G."/>
            <person name="Mikoshiba K."/>
        </authorList>
    </citation>
    <scope>INTERACTION WITH SLC4A4</scope>
</reference>
<reference key="7">
    <citation type="journal article" date="2007" name="Proc. Natl. Acad. Sci. U.S.A.">
        <title>Large-scale phosphorylation analysis of mouse liver.</title>
        <authorList>
            <person name="Villen J."/>
            <person name="Beausoleil S.A."/>
            <person name="Gerber S.A."/>
            <person name="Gygi S.P."/>
        </authorList>
    </citation>
    <scope>IDENTIFICATION BY MASS SPECTROMETRY [LARGE SCALE ANALYSIS]</scope>
    <source>
        <tissue>Liver</tissue>
    </source>
</reference>
<reference key="8">
    <citation type="journal article" date="2009" name="J. Biol. Chem.">
        <title>Inositol 1,4,5-triphosphate receptor-binding protein released with inositol 1,4,5-triphosphate (IRBIT) associates with components of the mRNA 3' processing machinery in a phosphorylation-dependent manner and inhibits polyadenylation.</title>
        <authorList>
            <person name="Kiefer H."/>
            <person name="Mizutani A."/>
            <person name="Iemura S."/>
            <person name="Natsume T."/>
            <person name="Ando H."/>
            <person name="Kuroda Y."/>
            <person name="Mikoshiba K."/>
        </authorList>
    </citation>
    <scope>FUNCTION</scope>
    <scope>INTERACTION WITH FIP1L1</scope>
</reference>
<reference key="9">
    <citation type="journal article" date="2009" name="J. Clin. Invest.">
        <title>IRBIT coordinates epithelial fluid and HCO3- secretion by stimulating the transporters pNBC1 and CFTR in the murine pancreatic duct.</title>
        <authorList>
            <person name="Yang D."/>
            <person name="Shcheynikov N."/>
            <person name="Zeng W."/>
            <person name="Ohana E."/>
            <person name="So I."/>
            <person name="Ando H."/>
            <person name="Mizutani A."/>
            <person name="Mikoshiba K."/>
            <person name="Muallem S."/>
        </authorList>
    </citation>
    <scope>FUNCTION</scope>
    <scope>TISSUE SPECIFICITY</scope>
    <scope>INTERACTION WITH CFTR AND SLC4A4</scope>
</reference>
<reference key="10">
    <citation type="journal article" date="2009" name="J. Neurochem.">
        <title>An IRBIT homologue lacks binding activity to inositol 1,4,5-trisphosphate receptor due to the unique N-terminal appendage.</title>
        <authorList>
            <person name="Ando H."/>
            <person name="Mizutani A."/>
            <person name="Mikoshiba K."/>
        </authorList>
    </citation>
    <scope>TISSUE SPECIFICITY</scope>
    <scope>SUBCELLULAR LOCATION</scope>
</reference>
<reference key="11">
    <citation type="journal article" date="2010" name="Cell">
        <title>A tissue-specific atlas of mouse protein phosphorylation and expression.</title>
        <authorList>
            <person name="Huttlin E.L."/>
            <person name="Jedrychowski M.P."/>
            <person name="Elias J.E."/>
            <person name="Goswami T."/>
            <person name="Rad R."/>
            <person name="Beausoleil S.A."/>
            <person name="Villen J."/>
            <person name="Haas W."/>
            <person name="Sowa M.E."/>
            <person name="Gygi S.P."/>
        </authorList>
    </citation>
    <scope>PHOSPHORYLATION [LARGE SCALE ANALYSIS] AT SER-84</scope>
    <scope>IDENTIFICATION BY MASS SPECTROMETRY [LARGE SCALE ANALYSIS]</scope>
    <source>
        <tissue>Brain</tissue>
        <tissue>Brown adipose tissue</tissue>
        <tissue>Heart</tissue>
        <tissue>Kidney</tissue>
        <tissue>Liver</tissue>
        <tissue>Lung</tissue>
        <tissue>Testis</tissue>
    </source>
</reference>
<reference key="12">
    <citation type="journal article" date="2011" name="J. Clin. Invest.">
        <title>IRBIT governs epithelial secretion in mice by antagonizing the WNK/SPAK kinase pathway.</title>
        <authorList>
            <person name="Yang D."/>
            <person name="Li Q."/>
            <person name="So I."/>
            <person name="Huang C.L."/>
            <person name="Ando H."/>
            <person name="Mizutani A."/>
            <person name="Seki G."/>
            <person name="Mikoshiba K."/>
            <person name="Thomas P.J."/>
            <person name="Muallem S."/>
        </authorList>
    </citation>
    <scope>FUNCTION</scope>
    <scope>INTERACTION WITH SLC4A4</scope>
    <scope>MUTAGENESIS OF 42-ILE--PHE-44</scope>
</reference>
<reference key="13">
    <citation type="journal article" date="2013" name="Gastroenterology">
        <title>Irbit mediates synergy between ca(2+) and cAMP signaling pathways during epithelial transport in mice.</title>
        <authorList>
            <person name="Park S."/>
            <person name="Shcheynikov N."/>
            <person name="Hong J.H."/>
            <person name="Zheng C."/>
            <person name="Suh S.H."/>
            <person name="Kawaai K."/>
            <person name="Ando H."/>
            <person name="Mizutani A."/>
            <person name="Abe T."/>
            <person name="Kiyonari H."/>
            <person name="Seki G."/>
            <person name="Yule D."/>
            <person name="Mikoshiba K."/>
            <person name="Muallem S."/>
        </authorList>
    </citation>
    <scope>FUNCTION</scope>
    <scope>INTERACTION WITH CFTR; ITPR1 AND SLC26A6</scope>
</reference>
<reference key="14">
    <citation type="journal article" date="2013" name="Mol. Cell">
        <title>SIRT5-mediated lysine desuccinylation impacts diverse metabolic pathways.</title>
        <authorList>
            <person name="Park J."/>
            <person name="Chen Y."/>
            <person name="Tishkoff D.X."/>
            <person name="Peng C."/>
            <person name="Tan M."/>
            <person name="Dai L."/>
            <person name="Xie Z."/>
            <person name="Zhang Y."/>
            <person name="Zwaans B.M."/>
            <person name="Skinner M.E."/>
            <person name="Lombard D.B."/>
            <person name="Zhao Y."/>
        </authorList>
    </citation>
    <scope>ACETYLATION [LARGE SCALE ANALYSIS] AT LYS-40</scope>
    <scope>IDENTIFICATION BY MASS SPECTROMETRY [LARGE SCALE ANALYSIS]</scope>
    <source>
        <tissue>Embryonic fibroblast</tissue>
    </source>
</reference>
<sequence>MSMPDAMPLPGVGEELKQAKEIEDAEKYSFMATVTKAPKKQIQFADDMQEFTKFPTKTGRRSLSRSISQSSTDSYSSAASYTDSSDDEVSPREKQQTNSKGSSNFCVKNIKQAEFGRREIEIAEQDMSALISLRKRAQGEKPLAGAKIVGCTHITAQTAVLIETLCALGAQCRWSACNIYSTQNEVAAALAEAGVAVFAWKGESEDDFWWCIDRCVNMDGWQANMILDDGGDLTHWVYKKYPNVFKKIRGIVEESVTGVHRLYQLSKAGKLCVPAMNVNDSVTKQKFDNLYCCRESILDGLKRTTDVMFGGKQVVVCGYGEVGKGCCAALKALGAIVYITEIDPICALQACMDGFRVVKLNEVIRQVDVVITCTGNKNVVTREHLDRMKNSCIVCNMGHSNTEIDVTSLRTPELTWERVRSQVDHVIWPDGKRVVLLAEGRLLNLSCSTVPTFVLSITATTQALALIELYNAPEGRYKQDVYLLPKKMDEYVASLHLPSFDAHLTELTDDQAKYLGLNKNGPFKPNYYRY</sequence>
<keyword id="KW-0007">Acetylation</keyword>
<keyword id="KW-1003">Cell membrane</keyword>
<keyword id="KW-0963">Cytoplasm</keyword>
<keyword id="KW-0903">Direct protein sequencing</keyword>
<keyword id="KW-0256">Endoplasmic reticulum</keyword>
<keyword id="KW-0472">Membrane</keyword>
<keyword id="KW-0492">Microsome</keyword>
<keyword id="KW-0520">NAD</keyword>
<keyword id="KW-0554">One-carbon metabolism</keyword>
<keyword id="KW-0597">Phosphoprotein</keyword>
<keyword id="KW-1185">Reference proteome</keyword>
<keyword id="KW-0694">RNA-binding</keyword>
<organism>
    <name type="scientific">Mus musculus</name>
    <name type="common">Mouse</name>
    <dbReference type="NCBI Taxonomy" id="10090"/>
    <lineage>
        <taxon>Eukaryota</taxon>
        <taxon>Metazoa</taxon>
        <taxon>Chordata</taxon>
        <taxon>Craniata</taxon>
        <taxon>Vertebrata</taxon>
        <taxon>Euteleostomi</taxon>
        <taxon>Mammalia</taxon>
        <taxon>Eutheria</taxon>
        <taxon>Euarchontoglires</taxon>
        <taxon>Glires</taxon>
        <taxon>Rodentia</taxon>
        <taxon>Myomorpha</taxon>
        <taxon>Muroidea</taxon>
        <taxon>Muridae</taxon>
        <taxon>Murinae</taxon>
        <taxon>Mus</taxon>
        <taxon>Mus</taxon>
    </lineage>
</organism>
<comment type="function">
    <text evidence="2 3 5 7 8 10 11 12">Multifaceted cellular regulator which coordinates several essential cellular functions including regulation of epithelial HCO3(-) and fluid secretion, mRNA processing and DNA replication. Regulates ITPR1 sensitivity to inositol 1,4,5-trisphosphate, competing for the common binding site and acting as endogenous 'pseudoligand' whose inhibitory activity can be modulated by its phosphorylation status. Promotes the formation of contact points between the endoplasmic reticulum (ER) and mitochondria, facilitating transfer of Ca(2+) from the ER to mitochondria (By similarity). Under normal cellular conditions, functions cooperatively with BCL2L10 to limit ITPR1-mediated Ca(2+) release but, under apoptotic stress conditions, dephosphorylated which promotes dissociation of both AHCYL1 and BCL2L10 from mitochondria-associated endoplasmic reticulum membranes, inhibits BCL2L10 interaction with ITPR1 and leads to increased Ca(2+) transfer to mitochondria which promotes apoptosis (By similarity). In the pancreatic and salivary ducts, at resting state, attenuates inositol 1,4,5-trisphosphate-induced calcium release by interacting with ITPR1 (By similarity). When extracellular stimuli induce ITPR1 phosphorylation or inositol 1,4,5-trisphosphate production, dissociates from ITPR1 to interact with CFTR and SLC26A6, mediating their synergistic activation by calcium and cAMP that stimulates the epithelial secretion of electrolytes and fluid (PubMed:12525476, PubMed:23542070). Also activates basolateral SLC4A4 isoform 1 to coordinate fluid and HCO3(-) secretion (PubMed:19224921). Inhibits the effect of STK39 on SLC4A4 and CFTR by recruiting PP1 phosphatase which activates SLC4A4, SLC26A6 and CFTR through dephosphorylation (PubMed:19033647, PubMed:21317537). Mediates the induction of SLC9A3 surface expression produced by Angiotensin-2. Depending on the cell type, activates SLC9A3 in response to calcium or reverses SLC9A3R2-dependent calcium inhibition. May modulate the polyadenylation state of specific mRNAs, both by controlling the subcellular location of FIP1L1 and by inhibiting PAPOLA activity, in response to a stimulus that alters its phosphorylation state. Acts as a (dATP)-dependent inhibitor of ribonucleotide reductase large subunit RRM1, controlling the endogenous dNTP pool and ensuring normal cell cycle progression (By similarity). In vitro does not exhibit any S-adenosyl-L-homocysteine hydrolase activity (PubMed:12525476).</text>
</comment>
<comment type="cofactor">
    <cofactor evidence="3">
        <name>NAD(+)</name>
        <dbReference type="ChEBI" id="CHEBI:57540"/>
    </cofactor>
    <text evidence="3">Binds 1 NAD(+) per subunit.</text>
</comment>
<comment type="subunit">
    <text evidence="3 5 6 7 8 9 10 11 12">Forms multimers (By similarity). Forms heteromultimers with AHCYL2 (via the C-terminal region) (PubMed:19220705). Interacts (when phosphorylated) with ITPR1 (when not phosphorylated); the interaction suppresses inositol 1,4,5-trisphosphate binding to ITPR1 (PubMed:23542070). Interacts with BCL2L10; this strengthens the interaction of AHCYL1 with ITPR1 (By similarity). Interacts with CFTR and SLC26A6; the interactions take place once AHCYL1 is released from ITPR1 and increase CFTR and SLC26A6 activities (PubMed:19033647, PubMed:21317537, PubMed:23542070). Interacts with RRM1; in a phosphorylation- and (dATP)-dependent manner. Interacts (via PEST domain when phosphorylated) with SLC4A4 isoform 1 but not isoform 2; the interaction increases SLC4A4 isoform 1 activity (PubMed:16769890, PubMed:19033647, PubMed:21317537). Interacts (when phosphorylated) with SLC9A3; the interaction is required for SLC9A3 apical location and activity (PubMed:19224921). Interacts (when phosphorylated) with FIP1L1; the interaction is direct and associates AHCYL1 with the CPSF complex and RNA Interacts with PAPOLA (By similarity). Interacts with ZCCHC4 (By similarity). Interacts with AHCY (By similarity).</text>
</comment>
<comment type="subcellular location">
    <subcellularLocation>
        <location evidence="6">Endoplasmic reticulum</location>
    </subcellularLocation>
    <subcellularLocation>
        <location evidence="9">Cytoplasm</location>
        <location evidence="9">Cytosol</location>
    </subcellularLocation>
    <subcellularLocation>
        <location evidence="2">Apical cell membrane</location>
        <topology evidence="13">Peripheral membrane protein</topology>
    </subcellularLocation>
    <subcellularLocation>
        <location evidence="9">Microsome</location>
    </subcellularLocation>
    <text evidence="3 9">Associates with membranes when phosphorylated, probably through interaction with ITPR1 (PubMed:19220705). Localizes to mitochondria-associated endoplasmic reticulum membranes (MAMs) (By similarity). Localization to MAMs is greatly reduced under apoptotic stress conditions (By similarity).</text>
</comment>
<comment type="tissue specificity">
    <text evidence="5 8 9">Widely expressed (at protein level). Expressed in the lateral and luminal poles of the pancreatic duct (at protein level).</text>
</comment>
<comment type="domain">
    <text evidence="3 5">The PEST region is essential for the interaction with ITPR1, and, when phosphorylated, is also the RRM1-binding region. The PDZ-binding region is required for maximal interaction with ITPR1 and is also responsible for the IP3-insensitive interaction with ITPR1.</text>
</comment>
<comment type="PTM">
    <text evidence="3">Phosphorylated at Ser/Thr residues between Ser-68 and Thr-72 in the PEST region: required for interaction with dATP-bound RRM1 and ITPR1. Phosphorylation at Ser-68 by PRKD1 and CAMK4 is required for further phosphorylations by CSNK1A1. Phosphorylation is induced by oxidative stress. Probably phosphorylated by CAMK2A; phosphorylation at Ser-68 may be required for interaction with SLC9A3. Dephosphorylated in response to apoptotic stress conditions which causes translocation of both AHCYL1 and BCL2L10 from mitochondria-associated endoplasmic reticulum membranes and promotes apoptosis.</text>
</comment>
<comment type="similarity">
    <text evidence="13">Belongs to the adenosylhomocysteinase family.</text>
</comment>
<comment type="caution">
    <text evidence="5">In spite of its similarity with AHCY, which catalyzes the reversible hydrolysis of S-adenosyl-L-homocysteine to adenosine and homocysteine, recombinant AHCYL1 expressed in bacteria shows no hydrolase activity, nor does it affect the enzyme activity of AHCY.</text>
</comment>
<proteinExistence type="evidence at protein level"/>
<protein>
    <recommendedName>
        <fullName>S-adenosylhomocysteine hydrolase-like protein 1</fullName>
    </recommendedName>
    <alternativeName>
        <fullName>IP3R-binding protein released with inositol 1,4,5-trisphosphate</fullName>
    </alternativeName>
    <alternativeName>
        <fullName>Putative adenosylhomocysteinase 2</fullName>
    </alternativeName>
    <alternativeName>
        <fullName>S-adenosyl-L-homocysteine hydrolase 2</fullName>
        <shortName>AdoHcyase 2</shortName>
    </alternativeName>
</protein>
<dbReference type="EMBL" id="AB092504">
    <property type="protein sequence ID" value="BAC65166.1"/>
    <property type="molecule type" value="mRNA"/>
</dbReference>
<dbReference type="EMBL" id="BC018218">
    <property type="protein sequence ID" value="AAH18218.2"/>
    <property type="molecule type" value="mRNA"/>
</dbReference>
<dbReference type="EMBL" id="BK000547">
    <property type="protein sequence ID" value="DAA00059.1"/>
    <property type="molecule type" value="mRNA"/>
</dbReference>
<dbReference type="CCDS" id="CCDS38593.1"/>
<dbReference type="RefSeq" id="NP_663517.2">
    <property type="nucleotide sequence ID" value="NM_145542.3"/>
</dbReference>
<dbReference type="SMR" id="Q80SW1"/>
<dbReference type="BioGRID" id="230891">
    <property type="interactions" value="23"/>
</dbReference>
<dbReference type="CORUM" id="Q80SW1"/>
<dbReference type="FunCoup" id="Q80SW1">
    <property type="interactions" value="2161"/>
</dbReference>
<dbReference type="STRING" id="10090.ENSMUSP00000029490"/>
<dbReference type="iPTMnet" id="Q80SW1"/>
<dbReference type="PhosphoSitePlus" id="Q80SW1"/>
<dbReference type="SwissPalm" id="Q80SW1"/>
<dbReference type="jPOST" id="Q80SW1"/>
<dbReference type="PaxDb" id="10090-ENSMUSP00000029490"/>
<dbReference type="PeptideAtlas" id="Q80SW1"/>
<dbReference type="ProteomicsDB" id="253392"/>
<dbReference type="Pumba" id="Q80SW1"/>
<dbReference type="Antibodypedia" id="33777">
    <property type="antibodies" value="190 antibodies from 29 providers"/>
</dbReference>
<dbReference type="DNASU" id="229709"/>
<dbReference type="Ensembl" id="ENSMUST00000029490.15">
    <property type="protein sequence ID" value="ENSMUSP00000029490.9"/>
    <property type="gene ID" value="ENSMUSG00000027893.15"/>
</dbReference>
<dbReference type="GeneID" id="229709"/>
<dbReference type="KEGG" id="mmu:229709"/>
<dbReference type="UCSC" id="uc008qxi.1">
    <property type="organism name" value="mouse"/>
</dbReference>
<dbReference type="AGR" id="MGI:2385184"/>
<dbReference type="CTD" id="10768"/>
<dbReference type="MGI" id="MGI:2385184">
    <property type="gene designation" value="Ahcyl1"/>
</dbReference>
<dbReference type="VEuPathDB" id="HostDB:ENSMUSG00000027893"/>
<dbReference type="eggNOG" id="KOG1370">
    <property type="taxonomic scope" value="Eukaryota"/>
</dbReference>
<dbReference type="GeneTree" id="ENSGT00950000182981"/>
<dbReference type="HOGENOM" id="CLU_025194_2_1_1"/>
<dbReference type="InParanoid" id="Q80SW1"/>
<dbReference type="OMA" id="QPTHLCE"/>
<dbReference type="OrthoDB" id="10007170at2759"/>
<dbReference type="PhylomeDB" id="Q80SW1"/>
<dbReference type="TreeFam" id="TF300415"/>
<dbReference type="Reactome" id="R-MMU-5578775">
    <property type="pathway name" value="Ion homeostasis"/>
</dbReference>
<dbReference type="BioGRID-ORCS" id="229709">
    <property type="hits" value="3 hits in 80 CRISPR screens"/>
</dbReference>
<dbReference type="CD-CODE" id="CE726F99">
    <property type="entry name" value="Postsynaptic density"/>
</dbReference>
<dbReference type="ChiTaRS" id="Ahcyl1">
    <property type="organism name" value="mouse"/>
</dbReference>
<dbReference type="PRO" id="PR:Q80SW1"/>
<dbReference type="Proteomes" id="UP000000589">
    <property type="component" value="Chromosome 3"/>
</dbReference>
<dbReference type="RNAct" id="Q80SW1">
    <property type="molecule type" value="protein"/>
</dbReference>
<dbReference type="Bgee" id="ENSMUSG00000027893">
    <property type="expression patterns" value="Expressed in central gray substance of midbrain and 273 other cell types or tissues"/>
</dbReference>
<dbReference type="ExpressionAtlas" id="Q80SW1">
    <property type="expression patterns" value="baseline and differential"/>
</dbReference>
<dbReference type="GO" id="GO:0016324">
    <property type="term" value="C:apical plasma membrane"/>
    <property type="evidence" value="ECO:0000250"/>
    <property type="project" value="UniProtKB"/>
</dbReference>
<dbReference type="GO" id="GO:0005737">
    <property type="term" value="C:cytoplasm"/>
    <property type="evidence" value="ECO:0000250"/>
    <property type="project" value="UniProtKB"/>
</dbReference>
<dbReference type="GO" id="GO:0005829">
    <property type="term" value="C:cytosol"/>
    <property type="evidence" value="ECO:0000314"/>
    <property type="project" value="UniProtKB"/>
</dbReference>
<dbReference type="GO" id="GO:0005783">
    <property type="term" value="C:endoplasmic reticulum"/>
    <property type="evidence" value="ECO:0007669"/>
    <property type="project" value="UniProtKB-SubCell"/>
</dbReference>
<dbReference type="GO" id="GO:0043231">
    <property type="term" value="C:intracellular membrane-bounded organelle"/>
    <property type="evidence" value="ECO:0000314"/>
    <property type="project" value="UniProtKB"/>
</dbReference>
<dbReference type="GO" id="GO:0044233">
    <property type="term" value="C:mitochondria-associated endoplasmic reticulum membrane contact site"/>
    <property type="evidence" value="ECO:0000250"/>
    <property type="project" value="UniProtKB"/>
</dbReference>
<dbReference type="GO" id="GO:0030234">
    <property type="term" value="F:enzyme regulator activity"/>
    <property type="evidence" value="ECO:0000314"/>
    <property type="project" value="MGI"/>
</dbReference>
<dbReference type="GO" id="GO:0042802">
    <property type="term" value="F:identical protein binding"/>
    <property type="evidence" value="ECO:0007669"/>
    <property type="project" value="Ensembl"/>
</dbReference>
<dbReference type="GO" id="GO:0003723">
    <property type="term" value="F:RNA binding"/>
    <property type="evidence" value="ECO:0007669"/>
    <property type="project" value="UniProtKB-KW"/>
</dbReference>
<dbReference type="GO" id="GO:0038166">
    <property type="term" value="P:angiotensin-activated signaling pathway"/>
    <property type="evidence" value="ECO:0000250"/>
    <property type="project" value="UniProtKB"/>
</dbReference>
<dbReference type="GO" id="GO:0006915">
    <property type="term" value="P:apoptotic process"/>
    <property type="evidence" value="ECO:0000250"/>
    <property type="project" value="UniProtKB"/>
</dbReference>
<dbReference type="GO" id="GO:0042045">
    <property type="term" value="P:epithelial fluid transport"/>
    <property type="evidence" value="ECO:0000314"/>
    <property type="project" value="UniProtKB"/>
</dbReference>
<dbReference type="GO" id="GO:1990456">
    <property type="term" value="P:mitochondrion-endoplasmic reticulum membrane tethering"/>
    <property type="evidence" value="ECO:0000250"/>
    <property type="project" value="UniProtKB"/>
</dbReference>
<dbReference type="GO" id="GO:0006730">
    <property type="term" value="P:one-carbon metabolic process"/>
    <property type="evidence" value="ECO:0007669"/>
    <property type="project" value="UniProtKB-KW"/>
</dbReference>
<dbReference type="GO" id="GO:0010765">
    <property type="term" value="P:positive regulation of sodium ion transport"/>
    <property type="evidence" value="ECO:0000316"/>
    <property type="project" value="MGI"/>
</dbReference>
<dbReference type="GO" id="GO:0006611">
    <property type="term" value="P:protein export from nucleus"/>
    <property type="evidence" value="ECO:0000314"/>
    <property type="project" value="MGI"/>
</dbReference>
<dbReference type="GO" id="GO:0044070">
    <property type="term" value="P:regulation of monoatomic anion transport"/>
    <property type="evidence" value="ECO:0000316"/>
    <property type="project" value="MGI"/>
</dbReference>
<dbReference type="GO" id="GO:0031440">
    <property type="term" value="P:regulation of mRNA 3'-end processing"/>
    <property type="evidence" value="ECO:0000314"/>
    <property type="project" value="MGI"/>
</dbReference>
<dbReference type="GO" id="GO:0051592">
    <property type="term" value="P:response to calcium ion"/>
    <property type="evidence" value="ECO:0007669"/>
    <property type="project" value="Ensembl"/>
</dbReference>
<dbReference type="CDD" id="cd00401">
    <property type="entry name" value="SAHH"/>
    <property type="match status" value="1"/>
</dbReference>
<dbReference type="FunFam" id="3.40.50.1480:FF:000002">
    <property type="entry name" value="Adenosylhomocysteinase"/>
    <property type="match status" value="1"/>
</dbReference>
<dbReference type="FunFam" id="3.40.50.1480:FF:000007">
    <property type="entry name" value="Adenosylhomocysteinase"/>
    <property type="match status" value="1"/>
</dbReference>
<dbReference type="FunFam" id="3.40.50.720:FF:000035">
    <property type="entry name" value="Adenosylhomocysteinase"/>
    <property type="match status" value="1"/>
</dbReference>
<dbReference type="FunFam" id="3.40.50.1480:FF:000009">
    <property type="entry name" value="Adenosylhomocysteinase like 2"/>
    <property type="match status" value="1"/>
</dbReference>
<dbReference type="Gene3D" id="3.40.50.1480">
    <property type="entry name" value="Adenosylhomocysteinase-like"/>
    <property type="match status" value="3"/>
</dbReference>
<dbReference type="Gene3D" id="3.40.50.720">
    <property type="entry name" value="NAD(P)-binding Rossmann-like Domain"/>
    <property type="match status" value="1"/>
</dbReference>
<dbReference type="InterPro" id="IPR042172">
    <property type="entry name" value="Adenosylhomocyst_ase-like_sf"/>
</dbReference>
<dbReference type="InterPro" id="IPR000043">
    <property type="entry name" value="Adenosylhomocysteinase-like"/>
</dbReference>
<dbReference type="InterPro" id="IPR015878">
    <property type="entry name" value="Ado_hCys_hydrolase_NAD-bd"/>
</dbReference>
<dbReference type="InterPro" id="IPR036291">
    <property type="entry name" value="NAD(P)-bd_dom_sf"/>
</dbReference>
<dbReference type="InterPro" id="IPR020082">
    <property type="entry name" value="S-Ado-L-homoCys_hydrolase_CS"/>
</dbReference>
<dbReference type="NCBIfam" id="TIGR00936">
    <property type="entry name" value="ahcY"/>
    <property type="match status" value="1"/>
</dbReference>
<dbReference type="NCBIfam" id="NF004005">
    <property type="entry name" value="PRK05476.2-3"/>
    <property type="match status" value="1"/>
</dbReference>
<dbReference type="PANTHER" id="PTHR23420">
    <property type="entry name" value="ADENOSYLHOMOCYSTEINASE"/>
    <property type="match status" value="1"/>
</dbReference>
<dbReference type="PANTHER" id="PTHR23420:SF3">
    <property type="entry name" value="S-ADENOSYLHOMOCYSTEINE HYDROLASE-LIKE PROTEIN 1"/>
    <property type="match status" value="1"/>
</dbReference>
<dbReference type="Pfam" id="PF05221">
    <property type="entry name" value="AdoHcyase"/>
    <property type="match status" value="1"/>
</dbReference>
<dbReference type="Pfam" id="PF00670">
    <property type="entry name" value="AdoHcyase_NAD"/>
    <property type="match status" value="1"/>
</dbReference>
<dbReference type="PIRSF" id="PIRSF001109">
    <property type="entry name" value="Ad_hcy_hydrolase"/>
    <property type="match status" value="1"/>
</dbReference>
<dbReference type="SMART" id="SM00996">
    <property type="entry name" value="AdoHcyase"/>
    <property type="match status" value="1"/>
</dbReference>
<dbReference type="SMART" id="SM00997">
    <property type="entry name" value="AdoHcyase_NAD"/>
    <property type="match status" value="1"/>
</dbReference>
<dbReference type="SUPFAM" id="SSF52283">
    <property type="entry name" value="Formate/glycerate dehydrogenase catalytic domain-like"/>
    <property type="match status" value="1"/>
</dbReference>
<dbReference type="SUPFAM" id="SSF51735">
    <property type="entry name" value="NAD(P)-binding Rossmann-fold domains"/>
    <property type="match status" value="1"/>
</dbReference>
<dbReference type="PROSITE" id="PS00738">
    <property type="entry name" value="ADOHCYASE_1"/>
    <property type="match status" value="1"/>
</dbReference>
<dbReference type="PROSITE" id="PS00739">
    <property type="entry name" value="ADOHCYASE_2"/>
    <property type="match status" value="1"/>
</dbReference>
<name>SAHH2_MOUSE</name>
<accession>Q80SW1</accession>
<evidence type="ECO:0000250" key="1"/>
<evidence type="ECO:0000250" key="2">
    <source>
        <dbReference type="UniProtKB" id="B5DFN2"/>
    </source>
</evidence>
<evidence type="ECO:0000250" key="3">
    <source>
        <dbReference type="UniProtKB" id="O43865"/>
    </source>
</evidence>
<evidence type="ECO:0000256" key="4">
    <source>
        <dbReference type="SAM" id="MobiDB-lite"/>
    </source>
</evidence>
<evidence type="ECO:0000269" key="5">
    <source>
    </source>
</evidence>
<evidence type="ECO:0000269" key="6">
    <source>
    </source>
</evidence>
<evidence type="ECO:0000269" key="7">
    <source>
    </source>
</evidence>
<evidence type="ECO:0000269" key="8">
    <source>
    </source>
</evidence>
<evidence type="ECO:0000269" key="9">
    <source>
    </source>
</evidence>
<evidence type="ECO:0000269" key="10">
    <source>
    </source>
</evidence>
<evidence type="ECO:0000269" key="11">
    <source>
    </source>
</evidence>
<evidence type="ECO:0000269" key="12">
    <source>
    </source>
</evidence>
<evidence type="ECO:0000305" key="13"/>
<evidence type="ECO:0007744" key="14">
    <source>
    </source>
</evidence>
<evidence type="ECO:0007744" key="15">
    <source>
    </source>
</evidence>
<feature type="initiator methionine" description="Removed" evidence="3">
    <location>
        <position position="1"/>
    </location>
</feature>
<feature type="chain" id="PRO_0000230300" description="S-adenosylhomocysteine hydrolase-like protein 1">
    <location>
        <begin position="2"/>
        <end position="530"/>
    </location>
</feature>
<feature type="region of interest" description="Disordered" evidence="4">
    <location>
        <begin position="53"/>
        <end position="103"/>
    </location>
</feature>
<feature type="region of interest" description="PEST" evidence="5">
    <location>
        <begin position="65"/>
        <end position="92"/>
    </location>
</feature>
<feature type="region of interest" description="Interaction with BCL2L10" evidence="3">
    <location>
        <begin position="138"/>
        <end position="201"/>
    </location>
</feature>
<feature type="region of interest" description="NAD binding" evidence="1">
    <location>
        <begin position="281"/>
        <end position="448"/>
    </location>
</feature>
<feature type="region of interest" description="PDZ-binding">
    <location>
        <begin position="520"/>
        <end position="530"/>
    </location>
</feature>
<feature type="compositionally biased region" description="Low complexity" evidence="4">
    <location>
        <begin position="64"/>
        <end position="83"/>
    </location>
</feature>
<feature type="binding site" evidence="1">
    <location>
        <position position="155"/>
    </location>
    <ligand>
        <name>substrate</name>
    </ligand>
</feature>
<feature type="binding site" evidence="1">
    <location>
        <position position="229"/>
    </location>
    <ligand>
        <name>substrate</name>
    </ligand>
</feature>
<feature type="binding site" evidence="1">
    <location>
        <position position="254"/>
    </location>
    <ligand>
        <name>substrate</name>
    </ligand>
</feature>
<feature type="binding site" evidence="1">
    <location>
        <position position="284"/>
    </location>
    <ligand>
        <name>substrate</name>
    </ligand>
</feature>
<feature type="binding site" evidence="1">
    <location>
        <position position="288"/>
    </location>
    <ligand>
        <name>substrate</name>
    </ligand>
</feature>
<feature type="binding site" evidence="3">
    <location>
        <begin position="318"/>
        <end position="322"/>
    </location>
    <ligand>
        <name>NAD(+)</name>
        <dbReference type="ChEBI" id="CHEBI:57540"/>
    </ligand>
</feature>
<feature type="binding site" evidence="3">
    <location>
        <position position="341"/>
    </location>
    <ligand>
        <name>NAD(+)</name>
        <dbReference type="ChEBI" id="CHEBI:57540"/>
    </ligand>
</feature>
<feature type="binding site" evidence="3">
    <location>
        <position position="376"/>
    </location>
    <ligand>
        <name>NAD(+)</name>
        <dbReference type="ChEBI" id="CHEBI:57540"/>
    </ligand>
</feature>
<feature type="binding site" evidence="3">
    <location>
        <begin position="397"/>
        <end position="399"/>
    </location>
    <ligand>
        <name>NAD(+)</name>
        <dbReference type="ChEBI" id="CHEBI:57540"/>
    </ligand>
</feature>
<feature type="modified residue" description="N-acetylserine" evidence="3">
    <location>
        <position position="2"/>
    </location>
</feature>
<feature type="modified residue" description="Phosphoserine" evidence="3">
    <location>
        <position position="2"/>
    </location>
</feature>
<feature type="modified residue" description="N6-acetyllysine" evidence="15">
    <location>
        <position position="40"/>
    </location>
</feature>
<feature type="modified residue" description="Phosphoserine; by PKD" evidence="3">
    <location>
        <position position="68"/>
    </location>
</feature>
<feature type="modified residue" description="Phosphoserine" evidence="3">
    <location>
        <position position="71"/>
    </location>
</feature>
<feature type="modified residue" description="Phosphoserine" evidence="3">
    <location>
        <position position="74"/>
    </location>
</feature>
<feature type="modified residue" description="Phosphoserine" evidence="3">
    <location>
        <position position="77"/>
    </location>
</feature>
<feature type="modified residue" description="Phosphoserine" evidence="14">
    <location>
        <position position="84"/>
    </location>
</feature>
<feature type="modified residue" description="Phosphoserine" evidence="3">
    <location>
        <position position="391"/>
    </location>
</feature>
<feature type="mutagenesis site" description="Inhibits SLC4A4 dephosphorylation by PP1 phosphatase and activity." evidence="11">
    <original>IQF</original>
    <variation>AQA</variation>
    <location>
        <begin position="42"/>
        <end position="44"/>
    </location>
</feature>
<feature type="mutagenesis site" description="Inhibits interaction with ITPR1." evidence="6">
    <location>
        <begin position="70"/>
        <end position="73"/>
    </location>
</feature>
<feature type="mutagenesis site" description="Inhibits interaction with ITPR1." evidence="6">
    <original>D</original>
    <variation>R</variation>
    <location>
        <position position="73"/>
    </location>
</feature>
<feature type="mutagenesis site" description="Inhibits interaction with ITPR1." evidence="6">
    <location>
        <begin position="82"/>
        <end position="88"/>
    </location>
</feature>
<feature type="mutagenesis site" description="Does not inhibit interaction with ITPR1." evidence="6">
    <original>DDE</original>
    <variation>KKK</variation>
    <location>
        <begin position="86"/>
        <end position="88"/>
    </location>
</feature>
<gene>
    <name type="primary">Ahcyl1</name>
    <name type="synonym">Irbit</name>
</gene>